<feature type="chain" id="PRO_0000207085" description="Gamma-butyrobetaine dioxygenase">
    <location>
        <begin position="1"/>
        <end position="387"/>
    </location>
</feature>
<feature type="binding site">
    <location>
        <position position="38"/>
    </location>
    <ligand>
        <name>Zn(2+)</name>
        <dbReference type="ChEBI" id="CHEBI:29105"/>
    </ligand>
</feature>
<feature type="binding site">
    <location>
        <position position="40"/>
    </location>
    <ligand>
        <name>Zn(2+)</name>
        <dbReference type="ChEBI" id="CHEBI:29105"/>
    </ligand>
</feature>
<feature type="binding site">
    <location>
        <position position="43"/>
    </location>
    <ligand>
        <name>Zn(2+)</name>
        <dbReference type="ChEBI" id="CHEBI:29105"/>
    </ligand>
</feature>
<feature type="binding site">
    <location>
        <position position="82"/>
    </location>
    <ligand>
        <name>Zn(2+)</name>
        <dbReference type="ChEBI" id="CHEBI:29105"/>
    </ligand>
</feature>
<feature type="binding site" evidence="3">
    <location>
        <position position="202"/>
    </location>
    <ligand>
        <name>Fe cation</name>
        <dbReference type="ChEBI" id="CHEBI:24875"/>
        <note>catalytic</note>
    </ligand>
</feature>
<feature type="binding site" evidence="3">
    <location>
        <position position="204"/>
    </location>
    <ligand>
        <name>Fe cation</name>
        <dbReference type="ChEBI" id="CHEBI:24875"/>
        <note>catalytic</note>
    </ligand>
</feature>
<feature type="binding site" evidence="3">
    <location>
        <position position="347"/>
    </location>
    <ligand>
        <name>Fe cation</name>
        <dbReference type="ChEBI" id="CHEBI:24875"/>
        <note>catalytic</note>
    </ligand>
</feature>
<feature type="modified residue" description="Phosphoserine" evidence="1">
    <location>
        <position position="351"/>
    </location>
</feature>
<feature type="turn" evidence="4">
    <location>
        <begin position="1"/>
        <end position="3"/>
    </location>
</feature>
<feature type="strand" evidence="5">
    <location>
        <begin position="4"/>
        <end position="11"/>
    </location>
</feature>
<feature type="turn" evidence="5">
    <location>
        <begin position="12"/>
        <end position="15"/>
    </location>
</feature>
<feature type="strand" evidence="5">
    <location>
        <begin position="16"/>
        <end position="21"/>
    </location>
</feature>
<feature type="strand" evidence="5">
    <location>
        <begin position="26"/>
        <end position="30"/>
    </location>
</feature>
<feature type="helix" evidence="5">
    <location>
        <begin position="31"/>
        <end position="36"/>
    </location>
</feature>
<feature type="turn" evidence="5">
    <location>
        <begin position="41"/>
        <end position="43"/>
    </location>
</feature>
<feature type="turn" evidence="5">
    <location>
        <begin position="46"/>
        <end position="49"/>
    </location>
</feature>
<feature type="helix" evidence="5">
    <location>
        <begin position="55"/>
        <end position="57"/>
    </location>
</feature>
<feature type="strand" evidence="5">
    <location>
        <begin position="65"/>
        <end position="69"/>
    </location>
</feature>
<feature type="strand" evidence="5">
    <location>
        <begin position="71"/>
        <end position="77"/>
    </location>
</feature>
<feature type="strand" evidence="5">
    <location>
        <begin position="83"/>
        <end position="87"/>
    </location>
</feature>
<feature type="helix" evidence="5">
    <location>
        <begin position="88"/>
        <end position="93"/>
    </location>
</feature>
<feature type="helix" evidence="5">
    <location>
        <begin position="98"/>
        <end position="109"/>
    </location>
</feature>
<feature type="strand" evidence="5">
    <location>
        <begin position="124"/>
        <end position="126"/>
    </location>
</feature>
<feature type="helix" evidence="5">
    <location>
        <begin position="127"/>
        <end position="132"/>
    </location>
</feature>
<feature type="helix" evidence="5">
    <location>
        <begin position="134"/>
        <end position="147"/>
    </location>
</feature>
<feature type="strand" evidence="5">
    <location>
        <begin position="148"/>
        <end position="153"/>
    </location>
</feature>
<feature type="strand" evidence="6">
    <location>
        <begin position="157"/>
        <end position="159"/>
    </location>
</feature>
<feature type="helix" evidence="5">
    <location>
        <begin position="161"/>
        <end position="169"/>
    </location>
</feature>
<feature type="strand" evidence="5">
    <location>
        <begin position="178"/>
        <end position="184"/>
    </location>
</feature>
<feature type="helix" evidence="5">
    <location>
        <begin position="192"/>
        <end position="194"/>
    </location>
</feature>
<feature type="strand" evidence="5">
    <location>
        <begin position="195"/>
        <end position="197"/>
    </location>
</feature>
<feature type="strand" evidence="5">
    <location>
        <begin position="199"/>
        <end position="202"/>
    </location>
</feature>
<feature type="strand" evidence="5">
    <location>
        <begin position="208"/>
        <end position="210"/>
    </location>
</feature>
<feature type="strand" evidence="5">
    <location>
        <begin position="213"/>
        <end position="221"/>
    </location>
</feature>
<feature type="strand" evidence="5">
    <location>
        <begin position="224"/>
        <end position="226"/>
    </location>
</feature>
<feature type="strand" evidence="5">
    <location>
        <begin position="229"/>
        <end position="233"/>
    </location>
</feature>
<feature type="helix" evidence="5">
    <location>
        <begin position="234"/>
        <end position="244"/>
    </location>
</feature>
<feature type="helix" evidence="5">
    <location>
        <begin position="246"/>
        <end position="252"/>
    </location>
</feature>
<feature type="strand" evidence="5">
    <location>
        <begin position="256"/>
        <end position="280"/>
    </location>
</feature>
<feature type="strand" evidence="5">
    <location>
        <begin position="286"/>
        <end position="289"/>
    </location>
</feature>
<feature type="turn" evidence="5">
    <location>
        <begin position="293"/>
        <end position="295"/>
    </location>
</feature>
<feature type="helix" evidence="5">
    <location>
        <begin position="304"/>
        <end position="306"/>
    </location>
</feature>
<feature type="helix" evidence="5">
    <location>
        <begin position="307"/>
        <end position="322"/>
    </location>
</feature>
<feature type="turn" evidence="5">
    <location>
        <begin position="324"/>
        <end position="326"/>
    </location>
</feature>
<feature type="strand" evidence="5">
    <location>
        <begin position="328"/>
        <end position="330"/>
    </location>
</feature>
<feature type="strand" evidence="5">
    <location>
        <begin position="337"/>
        <end position="341"/>
    </location>
</feature>
<feature type="turn" evidence="5">
    <location>
        <begin position="342"/>
        <end position="344"/>
    </location>
</feature>
<feature type="strand" evidence="5">
    <location>
        <begin position="345"/>
        <end position="349"/>
    </location>
</feature>
<feature type="strand" evidence="5">
    <location>
        <begin position="361"/>
        <end position="367"/>
    </location>
</feature>
<feature type="helix" evidence="5">
    <location>
        <begin position="369"/>
        <end position="383"/>
    </location>
</feature>
<protein>
    <recommendedName>
        <fullName>Gamma-butyrobetaine dioxygenase</fullName>
        <ecNumber>1.14.11.1</ecNumber>
    </recommendedName>
    <alternativeName>
        <fullName>Gamma-butyrobetaine hydroxylase</fullName>
        <shortName>Gamma-BBH</shortName>
    </alternativeName>
    <alternativeName>
        <fullName>Gamma-butyrobetaine,2-oxoglutarate dioxygenase</fullName>
    </alternativeName>
</protein>
<evidence type="ECO:0000250" key="1">
    <source>
        <dbReference type="UniProtKB" id="Q9QZU7"/>
    </source>
</evidence>
<evidence type="ECO:0000269" key="2">
    <source>
    </source>
</evidence>
<evidence type="ECO:0000305" key="3"/>
<evidence type="ECO:0007829" key="4">
    <source>
        <dbReference type="PDB" id="3O2G"/>
    </source>
</evidence>
<evidence type="ECO:0007829" key="5">
    <source>
        <dbReference type="PDB" id="4C5W"/>
    </source>
</evidence>
<evidence type="ECO:0007829" key="6">
    <source>
        <dbReference type="PDB" id="4CWD"/>
    </source>
</evidence>
<proteinExistence type="evidence at protein level"/>
<comment type="function">
    <text>Catalyzes the formation of L-carnitine from gamma-butyrobetaine.</text>
</comment>
<comment type="catalytic activity">
    <reaction evidence="2">
        <text>4-(trimethylamino)butanoate + 2-oxoglutarate + O2 = carnitine + succinate + CO2</text>
        <dbReference type="Rhea" id="RHEA:24028"/>
        <dbReference type="ChEBI" id="CHEBI:15379"/>
        <dbReference type="ChEBI" id="CHEBI:16244"/>
        <dbReference type="ChEBI" id="CHEBI:16526"/>
        <dbReference type="ChEBI" id="CHEBI:16810"/>
        <dbReference type="ChEBI" id="CHEBI:17126"/>
        <dbReference type="ChEBI" id="CHEBI:30031"/>
        <dbReference type="EC" id="1.14.11.1"/>
    </reaction>
</comment>
<comment type="cofactor">
    <cofactor evidence="3">
        <name>Fe(2+)</name>
        <dbReference type="ChEBI" id="CHEBI:29033"/>
    </cofactor>
    <text evidence="3">Binds 1 Fe(2+) ion per subunit.</text>
</comment>
<comment type="cofactor">
    <cofactor>
        <name>L-ascorbate</name>
        <dbReference type="ChEBI" id="CHEBI:38290"/>
    </cofactor>
</comment>
<comment type="pathway">
    <text>Amine and polyamine biosynthesis; carnitine biosynthesis.</text>
</comment>
<comment type="interaction">
    <interactant intactId="EBI-715662">
        <id>O75936</id>
    </interactant>
    <interactant intactId="EBI-715662">
        <id>O75936</id>
        <label>BBOX1</label>
    </interactant>
    <organismsDiffer>false</organismsDiffer>
    <experiments>6</experiments>
</comment>
<comment type="interaction">
    <interactant intactId="EBI-715662">
        <id>O75936</id>
    </interactant>
    <interactant intactId="EBI-10171490">
        <id>A0MZ66-7</id>
        <label>SHTN1</label>
    </interactant>
    <organismsDiffer>false</organismsDiffer>
    <experiments>3</experiments>
</comment>
<comment type="subcellular location">
    <subcellularLocation>
        <location>Cytoplasm</location>
    </subcellularLocation>
</comment>
<comment type="tissue specificity">
    <text>Highly expressed in kidney; moderately expressed in liver; very low expression in brain.</text>
</comment>
<comment type="similarity">
    <text evidence="3">Belongs to the gamma-BBH/TMLD family.</text>
</comment>
<accession>O75936</accession>
<accession>B2R8L7</accession>
<accession>D3DQZ1</accession>
<accession>Q6IBJ2</accession>
<sequence>MACTIQKAEALDGAHLMQILWYDEEESLYPAVWLRDNCPCSDCYLDSAKARKLLVEALDVNIGIKGLIFDRKKVYITWPDEHYSEFQADWLKKRCFSKQARAKLQRELFFPECQYWGSELQLPTLDFEDVLRYDEHAYKWLSTLKKVGIVRLTGASDKPGEVSKLGKRMGFLYLTFYGHTWQVQDKIDANNVAYTTGKLSFHTDYPALHHPPGVQLLHCIKQTVTGGDSEIVDGFNVCQKLKKNNPQAFQILSSTFVDFTDIGVDYCDFSVQSKHKIIELDDKGQVVRINFNNATRDTIFDVPVERVQPFYAALKEFVDLMNSKESKFTFKMNPGDVITFDNWRLLHGRRSYEAGTEISRHLEGAYADWDVVMSRLRILRQRVENGN</sequence>
<reference key="1">
    <citation type="journal article" date="1998" name="Biochem. Biophys. Res. Commun.">
        <title>Carnitine biosynthesis: identification of the cDNA encoding human gamma-butyrobetaine hydroxylase.</title>
        <authorList>
            <person name="Vaz F.M."/>
            <person name="van Gool S."/>
            <person name="Ofman R."/>
            <person name="Ijlst L."/>
            <person name="Wanders R.J.A."/>
        </authorList>
    </citation>
    <scope>NUCLEOTIDE SEQUENCE [MRNA]</scope>
    <source>
        <tissue>Liver</tissue>
    </source>
</reference>
<reference key="2">
    <citation type="submission" date="2004-06" db="EMBL/GenBank/DDBJ databases">
        <title>Cloning of human full open reading frames in Gateway(TM) system entry vector (pDONR201).</title>
        <authorList>
            <person name="Ebert L."/>
            <person name="Schick M."/>
            <person name="Neubert P."/>
            <person name="Schatten R."/>
            <person name="Henze S."/>
            <person name="Korn B."/>
        </authorList>
    </citation>
    <scope>NUCLEOTIDE SEQUENCE [LARGE SCALE MRNA]</scope>
</reference>
<reference key="3">
    <citation type="journal article" date="2004" name="Nat. Genet.">
        <title>Complete sequencing and characterization of 21,243 full-length human cDNAs.</title>
        <authorList>
            <person name="Ota T."/>
            <person name="Suzuki Y."/>
            <person name="Nishikawa T."/>
            <person name="Otsuki T."/>
            <person name="Sugiyama T."/>
            <person name="Irie R."/>
            <person name="Wakamatsu A."/>
            <person name="Hayashi K."/>
            <person name="Sato H."/>
            <person name="Nagai K."/>
            <person name="Kimura K."/>
            <person name="Makita H."/>
            <person name="Sekine M."/>
            <person name="Obayashi M."/>
            <person name="Nishi T."/>
            <person name="Shibahara T."/>
            <person name="Tanaka T."/>
            <person name="Ishii S."/>
            <person name="Yamamoto J."/>
            <person name="Saito K."/>
            <person name="Kawai Y."/>
            <person name="Isono Y."/>
            <person name="Nakamura Y."/>
            <person name="Nagahari K."/>
            <person name="Murakami K."/>
            <person name="Yasuda T."/>
            <person name="Iwayanagi T."/>
            <person name="Wagatsuma M."/>
            <person name="Shiratori A."/>
            <person name="Sudo H."/>
            <person name="Hosoiri T."/>
            <person name="Kaku Y."/>
            <person name="Kodaira H."/>
            <person name="Kondo H."/>
            <person name="Sugawara M."/>
            <person name="Takahashi M."/>
            <person name="Kanda K."/>
            <person name="Yokoi T."/>
            <person name="Furuya T."/>
            <person name="Kikkawa E."/>
            <person name="Omura Y."/>
            <person name="Abe K."/>
            <person name="Kamihara K."/>
            <person name="Katsuta N."/>
            <person name="Sato K."/>
            <person name="Tanikawa M."/>
            <person name="Yamazaki M."/>
            <person name="Ninomiya K."/>
            <person name="Ishibashi T."/>
            <person name="Yamashita H."/>
            <person name="Murakawa K."/>
            <person name="Fujimori K."/>
            <person name="Tanai H."/>
            <person name="Kimata M."/>
            <person name="Watanabe M."/>
            <person name="Hiraoka S."/>
            <person name="Chiba Y."/>
            <person name="Ishida S."/>
            <person name="Ono Y."/>
            <person name="Takiguchi S."/>
            <person name="Watanabe S."/>
            <person name="Yosida M."/>
            <person name="Hotuta T."/>
            <person name="Kusano J."/>
            <person name="Kanehori K."/>
            <person name="Takahashi-Fujii A."/>
            <person name="Hara H."/>
            <person name="Tanase T.-O."/>
            <person name="Nomura Y."/>
            <person name="Togiya S."/>
            <person name="Komai F."/>
            <person name="Hara R."/>
            <person name="Takeuchi K."/>
            <person name="Arita M."/>
            <person name="Imose N."/>
            <person name="Musashino K."/>
            <person name="Yuuki H."/>
            <person name="Oshima A."/>
            <person name="Sasaki N."/>
            <person name="Aotsuka S."/>
            <person name="Yoshikawa Y."/>
            <person name="Matsunawa H."/>
            <person name="Ichihara T."/>
            <person name="Shiohata N."/>
            <person name="Sano S."/>
            <person name="Moriya S."/>
            <person name="Momiyama H."/>
            <person name="Satoh N."/>
            <person name="Takami S."/>
            <person name="Terashima Y."/>
            <person name="Suzuki O."/>
            <person name="Nakagawa S."/>
            <person name="Senoh A."/>
            <person name="Mizoguchi H."/>
            <person name="Goto Y."/>
            <person name="Shimizu F."/>
            <person name="Wakebe H."/>
            <person name="Hishigaki H."/>
            <person name="Watanabe T."/>
            <person name="Sugiyama A."/>
            <person name="Takemoto M."/>
            <person name="Kawakami B."/>
            <person name="Yamazaki M."/>
            <person name="Watanabe K."/>
            <person name="Kumagai A."/>
            <person name="Itakura S."/>
            <person name="Fukuzumi Y."/>
            <person name="Fujimori Y."/>
            <person name="Komiyama M."/>
            <person name="Tashiro H."/>
            <person name="Tanigami A."/>
            <person name="Fujiwara T."/>
            <person name="Ono T."/>
            <person name="Yamada K."/>
            <person name="Fujii Y."/>
            <person name="Ozaki K."/>
            <person name="Hirao M."/>
            <person name="Ohmori Y."/>
            <person name="Kawabata A."/>
            <person name="Hikiji T."/>
            <person name="Kobatake N."/>
            <person name="Inagaki H."/>
            <person name="Ikema Y."/>
            <person name="Okamoto S."/>
            <person name="Okitani R."/>
            <person name="Kawakami T."/>
            <person name="Noguchi S."/>
            <person name="Itoh T."/>
            <person name="Shigeta K."/>
            <person name="Senba T."/>
            <person name="Matsumura K."/>
            <person name="Nakajima Y."/>
            <person name="Mizuno T."/>
            <person name="Morinaga M."/>
            <person name="Sasaki M."/>
            <person name="Togashi T."/>
            <person name="Oyama M."/>
            <person name="Hata H."/>
            <person name="Watanabe M."/>
            <person name="Komatsu T."/>
            <person name="Mizushima-Sugano J."/>
            <person name="Satoh T."/>
            <person name="Shirai Y."/>
            <person name="Takahashi Y."/>
            <person name="Nakagawa K."/>
            <person name="Okumura K."/>
            <person name="Nagase T."/>
            <person name="Nomura N."/>
            <person name="Kikuchi H."/>
            <person name="Masuho Y."/>
            <person name="Yamashita R."/>
            <person name="Nakai K."/>
            <person name="Yada T."/>
            <person name="Nakamura Y."/>
            <person name="Ohara O."/>
            <person name="Isogai T."/>
            <person name="Sugano S."/>
        </authorList>
    </citation>
    <scope>NUCLEOTIDE SEQUENCE [LARGE SCALE MRNA]</scope>
    <source>
        <tissue>Cerebellum</tissue>
    </source>
</reference>
<reference key="4">
    <citation type="submission" date="2005-09" db="EMBL/GenBank/DDBJ databases">
        <authorList>
            <person name="Mural R.J."/>
            <person name="Istrail S."/>
            <person name="Sutton G.G."/>
            <person name="Florea L."/>
            <person name="Halpern A.L."/>
            <person name="Mobarry C.M."/>
            <person name="Lippert R."/>
            <person name="Walenz B."/>
            <person name="Shatkay H."/>
            <person name="Dew I."/>
            <person name="Miller J.R."/>
            <person name="Flanigan M.J."/>
            <person name="Edwards N.J."/>
            <person name="Bolanos R."/>
            <person name="Fasulo D."/>
            <person name="Halldorsson B.V."/>
            <person name="Hannenhalli S."/>
            <person name="Turner R."/>
            <person name="Yooseph S."/>
            <person name="Lu F."/>
            <person name="Nusskern D.R."/>
            <person name="Shue B.C."/>
            <person name="Zheng X.H."/>
            <person name="Zhong F."/>
            <person name="Delcher A.L."/>
            <person name="Huson D.H."/>
            <person name="Kravitz S.A."/>
            <person name="Mouchard L."/>
            <person name="Reinert K."/>
            <person name="Remington K.A."/>
            <person name="Clark A.G."/>
            <person name="Waterman M.S."/>
            <person name="Eichler E.E."/>
            <person name="Adams M.D."/>
            <person name="Hunkapiller M.W."/>
            <person name="Myers E.W."/>
            <person name="Venter J.C."/>
        </authorList>
    </citation>
    <scope>NUCLEOTIDE SEQUENCE [LARGE SCALE GENOMIC DNA]</scope>
</reference>
<reference key="5">
    <citation type="journal article" date="2004" name="Genome Res.">
        <title>The status, quality, and expansion of the NIH full-length cDNA project: the Mammalian Gene Collection (MGC).</title>
        <authorList>
            <consortium name="The MGC Project Team"/>
        </authorList>
    </citation>
    <scope>NUCLEOTIDE SEQUENCE [LARGE SCALE MRNA]</scope>
    <source>
        <tissue>Kidney</tissue>
    </source>
</reference>
<reference key="6">
    <citation type="journal article" date="2010" name="Biochem. Biophys. Res. Commun.">
        <title>Crystal structure of human gamma-butyrobetaine hydroxylase.</title>
        <authorList>
            <person name="Tars K."/>
            <person name="Rumnieks J."/>
            <person name="Zeltins A."/>
            <person name="Kazaks A."/>
            <person name="Kotelovica S."/>
            <person name="Leonciks A."/>
            <person name="Sharipo J."/>
            <person name="Viksna A."/>
            <person name="Kuka J."/>
            <person name="Liepinsh E."/>
            <person name="Dambrova M."/>
        </authorList>
    </citation>
    <scope>X-RAY CRYSTALLOGRAPHY (2.0 ANGSTROMS) IN COMPLEX WITH ZINC IONS</scope>
    <scope>CATALYTIC ACTIVITY</scope>
    <scope>SUBUNIT</scope>
</reference>
<gene>
    <name type="primary">BBOX1</name>
    <name type="synonym">BBH</name>
    <name type="synonym">BBOX</name>
</gene>
<keyword id="KW-0002">3D-structure</keyword>
<keyword id="KW-0124">Carnitine biosynthesis</keyword>
<keyword id="KW-0963">Cytoplasm</keyword>
<keyword id="KW-0223">Dioxygenase</keyword>
<keyword id="KW-0408">Iron</keyword>
<keyword id="KW-0479">Metal-binding</keyword>
<keyword id="KW-0560">Oxidoreductase</keyword>
<keyword id="KW-0597">Phosphoprotein</keyword>
<keyword id="KW-1267">Proteomics identification</keyword>
<keyword id="KW-1185">Reference proteome</keyword>
<keyword id="KW-0862">Zinc</keyword>
<organism>
    <name type="scientific">Homo sapiens</name>
    <name type="common">Human</name>
    <dbReference type="NCBI Taxonomy" id="9606"/>
    <lineage>
        <taxon>Eukaryota</taxon>
        <taxon>Metazoa</taxon>
        <taxon>Chordata</taxon>
        <taxon>Craniata</taxon>
        <taxon>Vertebrata</taxon>
        <taxon>Euteleostomi</taxon>
        <taxon>Mammalia</taxon>
        <taxon>Eutheria</taxon>
        <taxon>Euarchontoglires</taxon>
        <taxon>Primates</taxon>
        <taxon>Haplorrhini</taxon>
        <taxon>Catarrhini</taxon>
        <taxon>Hominidae</taxon>
        <taxon>Homo</taxon>
    </lineage>
</organism>
<name>BODG_HUMAN</name>
<dbReference type="EC" id="1.14.11.1"/>
<dbReference type="EMBL" id="AF082868">
    <property type="protein sequence ID" value="AAC64066.1"/>
    <property type="molecule type" value="mRNA"/>
</dbReference>
<dbReference type="EMBL" id="CR456812">
    <property type="protein sequence ID" value="CAG33093.1"/>
    <property type="molecule type" value="mRNA"/>
</dbReference>
<dbReference type="EMBL" id="AK313422">
    <property type="protein sequence ID" value="BAG36214.1"/>
    <property type="molecule type" value="mRNA"/>
</dbReference>
<dbReference type="EMBL" id="CH471064">
    <property type="protein sequence ID" value="EAW68290.1"/>
    <property type="molecule type" value="Genomic_DNA"/>
</dbReference>
<dbReference type="EMBL" id="CH471064">
    <property type="protein sequence ID" value="EAW68291.1"/>
    <property type="molecule type" value="Genomic_DNA"/>
</dbReference>
<dbReference type="EMBL" id="BC011034">
    <property type="protein sequence ID" value="AAH11034.1"/>
    <property type="molecule type" value="mRNA"/>
</dbReference>
<dbReference type="CCDS" id="CCDS7862.1"/>
<dbReference type="PIR" id="JE0360">
    <property type="entry name" value="JE0360"/>
</dbReference>
<dbReference type="RefSeq" id="NP_001363187.1">
    <property type="nucleotide sequence ID" value="NM_001376258.1"/>
</dbReference>
<dbReference type="RefSeq" id="NP_001363188.1">
    <property type="nucleotide sequence ID" value="NM_001376259.1"/>
</dbReference>
<dbReference type="RefSeq" id="NP_001363189.1">
    <property type="nucleotide sequence ID" value="NM_001376260.1"/>
</dbReference>
<dbReference type="RefSeq" id="NP_001363190.1">
    <property type="nucleotide sequence ID" value="NM_001376261.1"/>
</dbReference>
<dbReference type="RefSeq" id="NP_003977.1">
    <property type="nucleotide sequence ID" value="NM_003986.3"/>
</dbReference>
<dbReference type="RefSeq" id="XP_005253216.1">
    <property type="nucleotide sequence ID" value="XM_005253159.2"/>
</dbReference>
<dbReference type="RefSeq" id="XP_005253217.1">
    <property type="nucleotide sequence ID" value="XM_005253160.2"/>
</dbReference>
<dbReference type="RefSeq" id="XP_005253218.1">
    <property type="nucleotide sequence ID" value="XM_005253161.2"/>
</dbReference>
<dbReference type="RefSeq" id="XP_011518704.1">
    <property type="nucleotide sequence ID" value="XM_011520402.2"/>
</dbReference>
<dbReference type="RefSeq" id="XP_016873892.1">
    <property type="nucleotide sequence ID" value="XM_017018403.1"/>
</dbReference>
<dbReference type="RefSeq" id="XP_047283647.1">
    <property type="nucleotide sequence ID" value="XM_047427691.1"/>
</dbReference>
<dbReference type="RefSeq" id="XP_047283648.1">
    <property type="nucleotide sequence ID" value="XM_047427692.1"/>
</dbReference>
<dbReference type="RefSeq" id="XP_047283649.1">
    <property type="nucleotide sequence ID" value="XM_047427693.1"/>
</dbReference>
<dbReference type="RefSeq" id="XP_054226134.1">
    <property type="nucleotide sequence ID" value="XM_054370159.1"/>
</dbReference>
<dbReference type="RefSeq" id="XP_054226135.1">
    <property type="nucleotide sequence ID" value="XM_054370160.1"/>
</dbReference>
<dbReference type="RefSeq" id="XP_054226136.1">
    <property type="nucleotide sequence ID" value="XM_054370161.1"/>
</dbReference>
<dbReference type="PDB" id="3MS5">
    <property type="method" value="X-ray"/>
    <property type="resolution" value="1.82 A"/>
    <property type="chains" value="A=1-387"/>
</dbReference>
<dbReference type="PDB" id="3N6W">
    <property type="method" value="X-ray"/>
    <property type="resolution" value="2.00 A"/>
    <property type="chains" value="A=1-387"/>
</dbReference>
<dbReference type="PDB" id="3O2G">
    <property type="method" value="X-ray"/>
    <property type="resolution" value="1.78 A"/>
    <property type="chains" value="A=1-387"/>
</dbReference>
<dbReference type="PDB" id="4BG1">
    <property type="method" value="X-ray"/>
    <property type="resolution" value="1.89 A"/>
    <property type="chains" value="A=1-387"/>
</dbReference>
<dbReference type="PDB" id="4BGK">
    <property type="method" value="X-ray"/>
    <property type="resolution" value="2.18 A"/>
    <property type="chains" value="A=1-387"/>
</dbReference>
<dbReference type="PDB" id="4BGM">
    <property type="method" value="X-ray"/>
    <property type="resolution" value="2.40 A"/>
    <property type="chains" value="A=1-387"/>
</dbReference>
<dbReference type="PDB" id="4BHF">
    <property type="method" value="X-ray"/>
    <property type="resolution" value="2.05 A"/>
    <property type="chains" value="A=1-387"/>
</dbReference>
<dbReference type="PDB" id="4BHG">
    <property type="method" value="X-ray"/>
    <property type="resolution" value="1.85 A"/>
    <property type="chains" value="A=1-387"/>
</dbReference>
<dbReference type="PDB" id="4BHI">
    <property type="method" value="X-ray"/>
    <property type="resolution" value="2.15 A"/>
    <property type="chains" value="A=1-387"/>
</dbReference>
<dbReference type="PDB" id="4C5W">
    <property type="method" value="X-ray"/>
    <property type="resolution" value="1.70 A"/>
    <property type="chains" value="A=1-387"/>
</dbReference>
<dbReference type="PDB" id="4C8R">
    <property type="method" value="X-ray"/>
    <property type="resolution" value="2.82 A"/>
    <property type="chains" value="A/B/C/D/E/F=1-387"/>
</dbReference>
<dbReference type="PDB" id="4CWD">
    <property type="method" value="X-ray"/>
    <property type="resolution" value="1.90 A"/>
    <property type="chains" value="A=1-387"/>
</dbReference>
<dbReference type="PDBsum" id="3MS5"/>
<dbReference type="PDBsum" id="3N6W"/>
<dbReference type="PDBsum" id="3O2G"/>
<dbReference type="PDBsum" id="4BG1"/>
<dbReference type="PDBsum" id="4BGK"/>
<dbReference type="PDBsum" id="4BGM"/>
<dbReference type="PDBsum" id="4BHF"/>
<dbReference type="PDBsum" id="4BHG"/>
<dbReference type="PDBsum" id="4BHI"/>
<dbReference type="PDBsum" id="4C5W"/>
<dbReference type="PDBsum" id="4C8R"/>
<dbReference type="PDBsum" id="4CWD"/>
<dbReference type="SMR" id="O75936"/>
<dbReference type="BioGRID" id="114008">
    <property type="interactions" value="28"/>
</dbReference>
<dbReference type="FunCoup" id="O75936">
    <property type="interactions" value="350"/>
</dbReference>
<dbReference type="IntAct" id="O75936">
    <property type="interactions" value="23"/>
</dbReference>
<dbReference type="MINT" id="O75936"/>
<dbReference type="STRING" id="9606.ENSP00000263182"/>
<dbReference type="BindingDB" id="O75936"/>
<dbReference type="ChEMBL" id="CHEMBL2163175"/>
<dbReference type="DrugBank" id="DB00126">
    <property type="generic name" value="Ascorbic acid"/>
</dbReference>
<dbReference type="DrugCentral" id="O75936"/>
<dbReference type="iPTMnet" id="O75936"/>
<dbReference type="PhosphoSitePlus" id="O75936"/>
<dbReference type="BioMuta" id="BBOX1"/>
<dbReference type="jPOST" id="O75936"/>
<dbReference type="MassIVE" id="O75936"/>
<dbReference type="PaxDb" id="9606-ENSP00000263182"/>
<dbReference type="PeptideAtlas" id="O75936"/>
<dbReference type="ProteomicsDB" id="50301"/>
<dbReference type="Antibodypedia" id="2001">
    <property type="antibodies" value="411 antibodies from 30 providers"/>
</dbReference>
<dbReference type="DNASU" id="8424"/>
<dbReference type="Ensembl" id="ENST00000263182.8">
    <property type="protein sequence ID" value="ENSP00000263182.3"/>
    <property type="gene ID" value="ENSG00000129151.9"/>
</dbReference>
<dbReference type="Ensembl" id="ENST00000525090.1">
    <property type="protein sequence ID" value="ENSP00000433772.1"/>
    <property type="gene ID" value="ENSG00000129151.9"/>
</dbReference>
<dbReference type="Ensembl" id="ENST00000528583.5">
    <property type="protein sequence ID" value="ENSP00000434918.1"/>
    <property type="gene ID" value="ENSG00000129151.9"/>
</dbReference>
<dbReference type="Ensembl" id="ENST00000529202.5">
    <property type="protein sequence ID" value="ENSP00000435781.1"/>
    <property type="gene ID" value="ENSG00000129151.9"/>
</dbReference>
<dbReference type="GeneID" id="8424"/>
<dbReference type="KEGG" id="hsa:8424"/>
<dbReference type="MANE-Select" id="ENST00000263182.8">
    <property type="protein sequence ID" value="ENSP00000263182.3"/>
    <property type="RefSeq nucleotide sequence ID" value="NM_003986.3"/>
    <property type="RefSeq protein sequence ID" value="NP_003977.1"/>
</dbReference>
<dbReference type="UCSC" id="uc001mre.1">
    <property type="organism name" value="human"/>
</dbReference>
<dbReference type="AGR" id="HGNC:964"/>
<dbReference type="CTD" id="8424"/>
<dbReference type="DisGeNET" id="8424"/>
<dbReference type="GeneCards" id="BBOX1"/>
<dbReference type="HGNC" id="HGNC:964">
    <property type="gene designation" value="BBOX1"/>
</dbReference>
<dbReference type="HPA" id="ENSG00000129151">
    <property type="expression patterns" value="Group enriched (kidney, liver)"/>
</dbReference>
<dbReference type="MalaCards" id="BBOX1"/>
<dbReference type="MIM" id="603312">
    <property type="type" value="gene"/>
</dbReference>
<dbReference type="neXtProt" id="NX_O75936"/>
<dbReference type="OpenTargets" id="ENSG00000129151"/>
<dbReference type="PharmGKB" id="PA25274"/>
<dbReference type="VEuPathDB" id="HostDB:ENSG00000129151"/>
<dbReference type="eggNOG" id="KOG3888">
    <property type="taxonomic scope" value="Eukaryota"/>
</dbReference>
<dbReference type="GeneTree" id="ENSGT00530000063582"/>
<dbReference type="HOGENOM" id="CLU_021859_2_0_1"/>
<dbReference type="InParanoid" id="O75936"/>
<dbReference type="OMA" id="VHITWPN"/>
<dbReference type="OrthoDB" id="406634at2759"/>
<dbReference type="PAN-GO" id="O75936">
    <property type="GO annotations" value="3 GO annotations based on evolutionary models"/>
</dbReference>
<dbReference type="PhylomeDB" id="O75936"/>
<dbReference type="TreeFam" id="TF313805"/>
<dbReference type="BioCyc" id="MetaCyc:HS05246-MONOMER"/>
<dbReference type="BRENDA" id="1.14.11.1">
    <property type="organism ID" value="2681"/>
</dbReference>
<dbReference type="PathwayCommons" id="O75936"/>
<dbReference type="Reactome" id="R-HSA-71262">
    <property type="pathway name" value="Carnitine synthesis"/>
</dbReference>
<dbReference type="SABIO-RK" id="O75936"/>
<dbReference type="SignaLink" id="O75936"/>
<dbReference type="SIGNOR" id="O75936"/>
<dbReference type="UniPathway" id="UPA00118"/>
<dbReference type="BioGRID-ORCS" id="8424">
    <property type="hits" value="11 hits in 1158 CRISPR screens"/>
</dbReference>
<dbReference type="ChiTaRS" id="BBOX1">
    <property type="organism name" value="human"/>
</dbReference>
<dbReference type="EvolutionaryTrace" id="O75936"/>
<dbReference type="GeneWiki" id="Gamma-butyrobetaine_dioxygenase"/>
<dbReference type="GenomeRNAi" id="8424"/>
<dbReference type="Pharos" id="O75936">
    <property type="development level" value="Tchem"/>
</dbReference>
<dbReference type="PRO" id="PR:O75936"/>
<dbReference type="Proteomes" id="UP000005640">
    <property type="component" value="Chromosome 11"/>
</dbReference>
<dbReference type="RNAct" id="O75936">
    <property type="molecule type" value="protein"/>
</dbReference>
<dbReference type="Bgee" id="ENSG00000129151">
    <property type="expression patterns" value="Expressed in adult mammalian kidney and 154 other cell types or tissues"/>
</dbReference>
<dbReference type="ExpressionAtlas" id="O75936">
    <property type="expression patterns" value="baseline and differential"/>
</dbReference>
<dbReference type="GO" id="GO:0005829">
    <property type="term" value="C:cytosol"/>
    <property type="evidence" value="ECO:0000304"/>
    <property type="project" value="Reactome"/>
</dbReference>
<dbReference type="GO" id="GO:0070062">
    <property type="term" value="C:extracellular exosome"/>
    <property type="evidence" value="ECO:0007005"/>
    <property type="project" value="UniProtKB"/>
</dbReference>
<dbReference type="GO" id="GO:0005739">
    <property type="term" value="C:mitochondrion"/>
    <property type="evidence" value="ECO:0000318"/>
    <property type="project" value="GO_Central"/>
</dbReference>
<dbReference type="GO" id="GO:0008336">
    <property type="term" value="F:gamma-butyrobetaine dioxygenase activity"/>
    <property type="evidence" value="ECO:0000314"/>
    <property type="project" value="UniProtKB"/>
</dbReference>
<dbReference type="GO" id="GO:0042802">
    <property type="term" value="F:identical protein binding"/>
    <property type="evidence" value="ECO:0000353"/>
    <property type="project" value="IntAct"/>
</dbReference>
<dbReference type="GO" id="GO:0005506">
    <property type="term" value="F:iron ion binding"/>
    <property type="evidence" value="ECO:0007669"/>
    <property type="project" value="InterPro"/>
</dbReference>
<dbReference type="GO" id="GO:0008270">
    <property type="term" value="F:zinc ion binding"/>
    <property type="evidence" value="ECO:0000314"/>
    <property type="project" value="UniProtKB"/>
</dbReference>
<dbReference type="GO" id="GO:0045329">
    <property type="term" value="P:carnitine biosynthetic process"/>
    <property type="evidence" value="ECO:0000314"/>
    <property type="project" value="UniProtKB"/>
</dbReference>
<dbReference type="CDD" id="cd00250">
    <property type="entry name" value="CAS_like"/>
    <property type="match status" value="1"/>
</dbReference>
<dbReference type="DisProt" id="DP02678"/>
<dbReference type="FunFam" id="3.60.130.10:FF:000015">
    <property type="entry name" value="Gamma-butyrobetaine dioxygenase"/>
    <property type="match status" value="1"/>
</dbReference>
<dbReference type="FunFam" id="3.30.2020.30:FF:000002">
    <property type="entry name" value="Putative gamma-butyrobetaine dioxygenase"/>
    <property type="match status" value="1"/>
</dbReference>
<dbReference type="Gene3D" id="3.30.2020.30">
    <property type="match status" value="1"/>
</dbReference>
<dbReference type="Gene3D" id="3.60.130.10">
    <property type="entry name" value="Clavaminate synthase-like"/>
    <property type="match status" value="1"/>
</dbReference>
<dbReference type="InterPro" id="IPR050411">
    <property type="entry name" value="AlphaKG_dependent_hydroxylases"/>
</dbReference>
<dbReference type="InterPro" id="IPR012775">
    <property type="entry name" value="GBBH-like"/>
</dbReference>
<dbReference type="InterPro" id="IPR010376">
    <property type="entry name" value="GBBH-like_N"/>
</dbReference>
<dbReference type="InterPro" id="IPR038492">
    <property type="entry name" value="GBBH-like_N_sf"/>
</dbReference>
<dbReference type="InterPro" id="IPR042098">
    <property type="entry name" value="TauD-like_sf"/>
</dbReference>
<dbReference type="InterPro" id="IPR003819">
    <property type="entry name" value="TauD/TfdA-like"/>
</dbReference>
<dbReference type="NCBIfam" id="TIGR02409">
    <property type="entry name" value="carnitine_bodg"/>
    <property type="match status" value="1"/>
</dbReference>
<dbReference type="PANTHER" id="PTHR10696:SF33">
    <property type="entry name" value="GAMMA-BUTYROBETAINE DIOXYGENASE"/>
    <property type="match status" value="1"/>
</dbReference>
<dbReference type="PANTHER" id="PTHR10696">
    <property type="entry name" value="GAMMA-BUTYROBETAINE HYDROXYLASE-RELATED"/>
    <property type="match status" value="1"/>
</dbReference>
<dbReference type="Pfam" id="PF06155">
    <property type="entry name" value="GBBH-like_N"/>
    <property type="match status" value="1"/>
</dbReference>
<dbReference type="Pfam" id="PF02668">
    <property type="entry name" value="TauD"/>
    <property type="match status" value="1"/>
</dbReference>
<dbReference type="SUPFAM" id="SSF51197">
    <property type="entry name" value="Clavaminate synthase-like"/>
    <property type="match status" value="1"/>
</dbReference>